<name>RRF_BACAA</name>
<reference key="1">
    <citation type="submission" date="2009-04" db="EMBL/GenBank/DDBJ databases">
        <title>Genome sequence of Bacillus anthracis A0248.</title>
        <authorList>
            <person name="Dodson R.J."/>
            <person name="Munk A.C."/>
            <person name="Bruce D."/>
            <person name="Detter C."/>
            <person name="Tapia R."/>
            <person name="Sutton G."/>
            <person name="Sims D."/>
            <person name="Brettin T."/>
        </authorList>
    </citation>
    <scope>NUCLEOTIDE SEQUENCE [LARGE SCALE GENOMIC DNA]</scope>
    <source>
        <strain>A0248</strain>
    </source>
</reference>
<proteinExistence type="inferred from homology"/>
<accession>C3P5M6</accession>
<evidence type="ECO:0000255" key="1">
    <source>
        <dbReference type="HAMAP-Rule" id="MF_00040"/>
    </source>
</evidence>
<sequence>MGQQVLKFSNEKMEKAVAAYSRELATVRAGRASASVLDKVQVDYYGAPTPVVQLANITVPEARLLVIQPYDKTSIGDIEKAILKADLGLNPSNDGTVIRIAFPALTEERRRDLVKVVKKYAEEAKVAVRNVRRDGNDDLKKLEKAGEITEDDLRGYTEDIQKETDKYIAKVDEIAKNKEKEIMEV</sequence>
<organism>
    <name type="scientific">Bacillus anthracis (strain A0248)</name>
    <dbReference type="NCBI Taxonomy" id="592021"/>
    <lineage>
        <taxon>Bacteria</taxon>
        <taxon>Bacillati</taxon>
        <taxon>Bacillota</taxon>
        <taxon>Bacilli</taxon>
        <taxon>Bacillales</taxon>
        <taxon>Bacillaceae</taxon>
        <taxon>Bacillus</taxon>
        <taxon>Bacillus cereus group</taxon>
    </lineage>
</organism>
<comment type="function">
    <text evidence="1">Responsible for the release of ribosomes from messenger RNA at the termination of protein biosynthesis. May increase the efficiency of translation by recycling ribosomes from one round of translation to another.</text>
</comment>
<comment type="subcellular location">
    <subcellularLocation>
        <location evidence="1">Cytoplasm</location>
    </subcellularLocation>
</comment>
<comment type="similarity">
    <text evidence="1">Belongs to the RRF family.</text>
</comment>
<keyword id="KW-0963">Cytoplasm</keyword>
<keyword id="KW-0648">Protein biosynthesis</keyword>
<gene>
    <name evidence="1" type="primary">frr</name>
    <name type="ordered locus">BAA_3985</name>
</gene>
<feature type="chain" id="PRO_1000194893" description="Ribosome-recycling factor">
    <location>
        <begin position="1"/>
        <end position="185"/>
    </location>
</feature>
<dbReference type="EMBL" id="CP001598">
    <property type="protein sequence ID" value="ACQ50358.1"/>
    <property type="molecule type" value="Genomic_DNA"/>
</dbReference>
<dbReference type="RefSeq" id="WP_000531498.1">
    <property type="nucleotide sequence ID" value="NC_012659.1"/>
</dbReference>
<dbReference type="SMR" id="C3P5M6"/>
<dbReference type="GeneID" id="45023652"/>
<dbReference type="KEGG" id="bai:BAA_3985"/>
<dbReference type="HOGENOM" id="CLU_073981_2_0_9"/>
<dbReference type="GO" id="GO:0005737">
    <property type="term" value="C:cytoplasm"/>
    <property type="evidence" value="ECO:0007669"/>
    <property type="project" value="UniProtKB-SubCell"/>
</dbReference>
<dbReference type="GO" id="GO:0043023">
    <property type="term" value="F:ribosomal large subunit binding"/>
    <property type="evidence" value="ECO:0007669"/>
    <property type="project" value="TreeGrafter"/>
</dbReference>
<dbReference type="GO" id="GO:0006415">
    <property type="term" value="P:translational termination"/>
    <property type="evidence" value="ECO:0007669"/>
    <property type="project" value="UniProtKB-UniRule"/>
</dbReference>
<dbReference type="CDD" id="cd00520">
    <property type="entry name" value="RRF"/>
    <property type="match status" value="1"/>
</dbReference>
<dbReference type="FunFam" id="1.10.132.20:FF:000001">
    <property type="entry name" value="Ribosome-recycling factor"/>
    <property type="match status" value="1"/>
</dbReference>
<dbReference type="FunFam" id="3.30.1360.40:FF:000001">
    <property type="entry name" value="Ribosome-recycling factor"/>
    <property type="match status" value="1"/>
</dbReference>
<dbReference type="Gene3D" id="3.30.1360.40">
    <property type="match status" value="1"/>
</dbReference>
<dbReference type="Gene3D" id="1.10.132.20">
    <property type="entry name" value="Ribosome-recycling factor"/>
    <property type="match status" value="1"/>
</dbReference>
<dbReference type="HAMAP" id="MF_00040">
    <property type="entry name" value="RRF"/>
    <property type="match status" value="1"/>
</dbReference>
<dbReference type="InterPro" id="IPR002661">
    <property type="entry name" value="Ribosome_recyc_fac"/>
</dbReference>
<dbReference type="InterPro" id="IPR023584">
    <property type="entry name" value="Ribosome_recyc_fac_dom"/>
</dbReference>
<dbReference type="InterPro" id="IPR036191">
    <property type="entry name" value="RRF_sf"/>
</dbReference>
<dbReference type="NCBIfam" id="TIGR00496">
    <property type="entry name" value="frr"/>
    <property type="match status" value="1"/>
</dbReference>
<dbReference type="PANTHER" id="PTHR20982:SF3">
    <property type="entry name" value="MITOCHONDRIAL RIBOSOME RECYCLING FACTOR PSEUDO 1"/>
    <property type="match status" value="1"/>
</dbReference>
<dbReference type="PANTHER" id="PTHR20982">
    <property type="entry name" value="RIBOSOME RECYCLING FACTOR"/>
    <property type="match status" value="1"/>
</dbReference>
<dbReference type="Pfam" id="PF01765">
    <property type="entry name" value="RRF"/>
    <property type="match status" value="1"/>
</dbReference>
<dbReference type="SUPFAM" id="SSF55194">
    <property type="entry name" value="Ribosome recycling factor, RRF"/>
    <property type="match status" value="1"/>
</dbReference>
<protein>
    <recommendedName>
        <fullName evidence="1">Ribosome-recycling factor</fullName>
        <shortName evidence="1">RRF</shortName>
    </recommendedName>
    <alternativeName>
        <fullName evidence="1">Ribosome-releasing factor</fullName>
    </alternativeName>
</protein>